<keyword id="KW-0963">Cytoplasm</keyword>
<keyword id="KW-0449">Lipoprotein</keyword>
<keyword id="KW-0472">Membrane</keyword>
<keyword id="KW-0519">Myristate</keyword>
<keyword id="KW-0597">Phosphoprotein</keyword>
<keyword id="KW-1185">Reference proteome</keyword>
<keyword id="KW-0926">Vacuole</keyword>
<evidence type="ECO:0000255" key="1"/>
<evidence type="ECO:0000256" key="2">
    <source>
        <dbReference type="SAM" id="MobiDB-lite"/>
    </source>
</evidence>
<evidence type="ECO:0000269" key="3">
    <source>
    </source>
</evidence>
<evidence type="ECO:0000269" key="4">
    <source>
    </source>
</evidence>
<evidence type="ECO:0000269" key="5">
    <source>
    </source>
</evidence>
<evidence type="ECO:0000269" key="6">
    <source>
    </source>
</evidence>
<evidence type="ECO:0000269" key="7">
    <source>
    </source>
</evidence>
<evidence type="ECO:0000269" key="8">
    <source>
    </source>
</evidence>
<evidence type="ECO:0000269" key="9">
    <source>
    </source>
</evidence>
<evidence type="ECO:0000269" key="10">
    <source>
    </source>
</evidence>
<evidence type="ECO:0000269" key="11">
    <source>
    </source>
</evidence>
<evidence type="ECO:0000269" key="12">
    <source>
    </source>
</evidence>
<evidence type="ECO:0000305" key="13"/>
<evidence type="ECO:0007744" key="14">
    <source>
    </source>
</evidence>
<evidence type="ECO:0007744" key="15">
    <source>
    </source>
</evidence>
<evidence type="ECO:0007744" key="16">
    <source>
    </source>
</evidence>
<organism>
    <name type="scientific">Saccharomyces cerevisiae (strain ATCC 204508 / S288c)</name>
    <name type="common">Baker's yeast</name>
    <dbReference type="NCBI Taxonomy" id="559292"/>
    <lineage>
        <taxon>Eukaryota</taxon>
        <taxon>Fungi</taxon>
        <taxon>Dikarya</taxon>
        <taxon>Ascomycota</taxon>
        <taxon>Saccharomycotina</taxon>
        <taxon>Saccharomycetes</taxon>
        <taxon>Saccharomycetales</taxon>
        <taxon>Saccharomycetaceae</taxon>
        <taxon>Saccharomyces</taxon>
    </lineage>
</organism>
<name>SIP1_YEAST</name>
<dbReference type="EMBL" id="M90531">
    <property type="protein sequence ID" value="AAA35045.1"/>
    <property type="status" value="ALT_INIT"/>
    <property type="molecule type" value="Genomic_DNA"/>
</dbReference>
<dbReference type="EMBL" id="U33007">
    <property type="protein sequence ID" value="AAB64887.1"/>
    <property type="status" value="ALT_INIT"/>
    <property type="molecule type" value="Genomic_DNA"/>
</dbReference>
<dbReference type="EMBL" id="BK006938">
    <property type="protein sequence ID" value="DAA12262.1"/>
    <property type="molecule type" value="Genomic_DNA"/>
</dbReference>
<dbReference type="PIR" id="S41984">
    <property type="entry name" value="S41984"/>
</dbReference>
<dbReference type="RefSeq" id="NP_010710.4">
    <property type="nucleotide sequence ID" value="NM_001180730.3"/>
</dbReference>
<dbReference type="BioGRID" id="32481">
    <property type="interactions" value="117"/>
</dbReference>
<dbReference type="ComplexPortal" id="CPX-232">
    <property type="entry name" value="Snf1 protein kinase complex variant SIP1"/>
</dbReference>
<dbReference type="DIP" id="DIP-777N"/>
<dbReference type="FunCoup" id="P32578">
    <property type="interactions" value="120"/>
</dbReference>
<dbReference type="IntAct" id="P32578">
    <property type="interactions" value="16"/>
</dbReference>
<dbReference type="MINT" id="P32578"/>
<dbReference type="STRING" id="4932.YDR422C"/>
<dbReference type="iPTMnet" id="P32578"/>
<dbReference type="PaxDb" id="4932-YDR422C"/>
<dbReference type="PeptideAtlas" id="P32578"/>
<dbReference type="EnsemblFungi" id="YDR422C_mRNA">
    <property type="protein sequence ID" value="YDR422C"/>
    <property type="gene ID" value="YDR422C"/>
</dbReference>
<dbReference type="GeneID" id="852032"/>
<dbReference type="KEGG" id="sce:YDR422C"/>
<dbReference type="AGR" id="SGD:S000002830"/>
<dbReference type="SGD" id="S000002830">
    <property type="gene designation" value="SIP1"/>
</dbReference>
<dbReference type="VEuPathDB" id="FungiDB:YDR422C"/>
<dbReference type="eggNOG" id="KOG1616">
    <property type="taxonomic scope" value="Eukaryota"/>
</dbReference>
<dbReference type="HOGENOM" id="CLU_011585_0_0_1"/>
<dbReference type="InParanoid" id="P32578"/>
<dbReference type="OMA" id="INHIIPH"/>
<dbReference type="OrthoDB" id="531008at2759"/>
<dbReference type="BioCyc" id="YEAST:G3O-29963-MONOMER"/>
<dbReference type="BRENDA" id="2.7.11.31">
    <property type="organism ID" value="984"/>
</dbReference>
<dbReference type="Reactome" id="R-SCE-1632852">
    <property type="pathway name" value="Macroautophagy"/>
</dbReference>
<dbReference type="Reactome" id="R-SCE-163680">
    <property type="pathway name" value="AMPK inhibits chREBP transcriptional activation activity"/>
</dbReference>
<dbReference type="Reactome" id="R-SCE-200425">
    <property type="pathway name" value="Carnitine shuttle"/>
</dbReference>
<dbReference type="Reactome" id="R-SCE-380972">
    <property type="pathway name" value="Energy dependent regulation of mTOR by LKB1-AMPK"/>
</dbReference>
<dbReference type="BioGRID-ORCS" id="852032">
    <property type="hits" value="2 hits in 10 CRISPR screens"/>
</dbReference>
<dbReference type="PRO" id="PR:P32578"/>
<dbReference type="Proteomes" id="UP000002311">
    <property type="component" value="Chromosome IV"/>
</dbReference>
<dbReference type="RNAct" id="P32578">
    <property type="molecule type" value="protein"/>
</dbReference>
<dbReference type="GO" id="GO:0005737">
    <property type="term" value="C:cytoplasm"/>
    <property type="evidence" value="ECO:0000318"/>
    <property type="project" value="GO_Central"/>
</dbReference>
<dbReference type="GO" id="GO:0005829">
    <property type="term" value="C:cytosol"/>
    <property type="evidence" value="ECO:0000314"/>
    <property type="project" value="SGD"/>
</dbReference>
<dbReference type="GO" id="GO:0000324">
    <property type="term" value="C:fungal-type vacuole"/>
    <property type="evidence" value="ECO:0000314"/>
    <property type="project" value="SGD"/>
</dbReference>
<dbReference type="GO" id="GO:0031588">
    <property type="term" value="C:nucleotide-activated protein kinase complex"/>
    <property type="evidence" value="ECO:0000314"/>
    <property type="project" value="SGD"/>
</dbReference>
<dbReference type="GO" id="GO:0005634">
    <property type="term" value="C:nucleus"/>
    <property type="evidence" value="ECO:0000318"/>
    <property type="project" value="GO_Central"/>
</dbReference>
<dbReference type="GO" id="GO:0005774">
    <property type="term" value="C:vacuolar membrane"/>
    <property type="evidence" value="ECO:0000314"/>
    <property type="project" value="SGD"/>
</dbReference>
<dbReference type="GO" id="GO:0140767">
    <property type="term" value="F:enzyme-substrate adaptor activity"/>
    <property type="evidence" value="ECO:0000316"/>
    <property type="project" value="GO_Central"/>
</dbReference>
<dbReference type="GO" id="GO:0019901">
    <property type="term" value="F:protein kinase binding"/>
    <property type="evidence" value="ECO:0000318"/>
    <property type="project" value="GO_Central"/>
</dbReference>
<dbReference type="GO" id="GO:1904547">
    <property type="term" value="P:regulation of cellular response to glucose starvation"/>
    <property type="evidence" value="ECO:0000250"/>
    <property type="project" value="ComplexPortal"/>
</dbReference>
<dbReference type="GO" id="GO:0043254">
    <property type="term" value="P:regulation of protein-containing complex assembly"/>
    <property type="evidence" value="ECO:0000316"/>
    <property type="project" value="SGD"/>
</dbReference>
<dbReference type="GO" id="GO:0007165">
    <property type="term" value="P:signal transduction"/>
    <property type="evidence" value="ECO:0000316"/>
    <property type="project" value="SGD"/>
</dbReference>
<dbReference type="CDD" id="cd02859">
    <property type="entry name" value="E_set_AMPKbeta_like_N"/>
    <property type="match status" value="1"/>
</dbReference>
<dbReference type="Gene3D" id="6.20.250.60">
    <property type="match status" value="1"/>
</dbReference>
<dbReference type="Gene3D" id="2.60.40.10">
    <property type="entry name" value="Immunoglobulins"/>
    <property type="match status" value="1"/>
</dbReference>
<dbReference type="InterPro" id="IPR032640">
    <property type="entry name" value="AMPK1_CBM"/>
</dbReference>
<dbReference type="InterPro" id="IPR006828">
    <property type="entry name" value="ASC_dom"/>
</dbReference>
<dbReference type="InterPro" id="IPR037256">
    <property type="entry name" value="ASC_dom_sf"/>
</dbReference>
<dbReference type="InterPro" id="IPR050827">
    <property type="entry name" value="CRP1_MDG1_kinase"/>
</dbReference>
<dbReference type="InterPro" id="IPR013783">
    <property type="entry name" value="Ig-like_fold"/>
</dbReference>
<dbReference type="InterPro" id="IPR014756">
    <property type="entry name" value="Ig_E-set"/>
</dbReference>
<dbReference type="PANTHER" id="PTHR10343">
    <property type="entry name" value="5'-AMP-ACTIVATED PROTEIN KINASE , BETA SUBUNIT"/>
    <property type="match status" value="1"/>
</dbReference>
<dbReference type="PANTHER" id="PTHR10343:SF87">
    <property type="entry name" value="SNF1 PROTEIN KINASE SUBUNIT BETA-1"/>
    <property type="match status" value="1"/>
</dbReference>
<dbReference type="Pfam" id="PF16561">
    <property type="entry name" value="AMPK1_CBM"/>
    <property type="match status" value="1"/>
</dbReference>
<dbReference type="Pfam" id="PF04739">
    <property type="entry name" value="AMPKBI"/>
    <property type="match status" value="1"/>
</dbReference>
<dbReference type="SMART" id="SM01010">
    <property type="entry name" value="AMPKBI"/>
    <property type="match status" value="1"/>
</dbReference>
<dbReference type="SUPFAM" id="SSF160219">
    <property type="entry name" value="AMPKBI-like"/>
    <property type="match status" value="1"/>
</dbReference>
<dbReference type="SUPFAM" id="SSF81296">
    <property type="entry name" value="E set domains"/>
    <property type="match status" value="1"/>
</dbReference>
<comment type="function">
    <text evidence="3 11">Beta subunit of the SNF1 kinase complex, which is required for transcriptional, metabolic, and developmental adaptations in response to glucose limitation. Has a structural role, mediating heterotrimer formation, and a regulatory role, defining carbon source-regulated subcellular location and substrate specificity of the SNF1 kinase complex. Promotes the PKA-regulated relocalization of the SNF1 kinase complex to the vacuolar membrane in response to various types of carbon stress.</text>
</comment>
<comment type="subunit">
    <text evidence="5 7 10 12">Component of the SNF1 kinase complex, a heterotrimeric complex composed of the catalytic alpha subunit SNF1, one of the three related beta subunits SIP1, SIP2 or GAL83, and the regulatory gamma subunit SNF4. The beta subunit serves as a bridge between the catalytic and the regulatory subunit. Interacts (via KIS domain) with SNF1. Interacts (via ASC domain) with SNF4.</text>
</comment>
<comment type="interaction">
    <interactant intactId="EBI-17179">
        <id>P32578</id>
    </interactant>
    <interactant intactId="EBI-17537">
        <id>P12904</id>
        <label>SNF4</label>
    </interactant>
    <organismsDiffer>false</organismsDiffer>
    <experiments>5</experiments>
</comment>
<comment type="subcellular location">
    <subcellularLocation>
        <location evidence="4 8">Cytoplasm</location>
    </subcellularLocation>
    <subcellularLocation>
        <location evidence="4 8">Vacuole membrane</location>
        <topology evidence="4 8">Peripheral membrane protein</topology>
        <orientation evidence="4 8">Cytoplasmic side</orientation>
    </subcellularLocation>
    <text evidence="8">Resides in the cytosol during growth in glucose and relocalizes to the vacuolar membrane in response to carbon stress.</text>
</comment>
<comment type="PTM">
    <text evidence="7 9 10">Phosphorylated by SNF1 in vitro.</text>
</comment>
<comment type="miscellaneous">
    <text evidence="6">Present with 623 molecules/cell in log phase SD medium.</text>
</comment>
<comment type="similarity">
    <text evidence="13">Belongs to the 5'-AMP-activated protein kinase beta subunit family.</text>
</comment>
<comment type="sequence caution" evidence="13">
    <conflict type="erroneous initiation">
        <sequence resource="EMBL-CDS" id="AAA35045"/>
    </conflict>
</comment>
<comment type="sequence caution" evidence="13">
    <conflict type="erroneous initiation">
        <sequence resource="EMBL-CDS" id="AAB64887"/>
    </conflict>
</comment>
<gene>
    <name type="primary">SIP1</name>
    <name type="ordered locus">YDR422C</name>
    <name type="ORF">D9461.11</name>
</gene>
<sequence>MGNSPSTQDPSHSTKKEHGHHFHDAFNKDRQGSITSQLFNNRKSTHKRRASHTSEHNGAIPPRMQLLASHDPSTDCDGRMSSDTTIDKGPSHLFKKDYSLSSAADVNDTTLANLTLSDDHDVGAPEEQVKSPSFLSPGPSMATVKRTKSDLDDLSTLNYTMVDETTENERNDKPHHERHRSSIIALKKNLLESSATASPSPTRSSSVHSASLPALTKTDSIDIPVRQPYSKKPSIHAYQYQYLNNDETFSENSQMDKEGNSDSVDAEAGVLQSEDMVLNQSLLQNALKKDMQRLSRVNSSNSMYTAERISHANNNGNIENNTRNKGNAGGSNDDFTAPISATAKMMMKLYGDKTLMERDLNKHHNKTKKAQNKKIRSVSNSRRSSFASLHSLQSRKSILTNGLNLQPLHPLHPIINDNESQYSAPQHREISHHSNSMSSMSSISSTNSTENTLVVLKWKDDGTVAATTEVFIVSTDIASALKEQRELTLDENASLDSEKQLNPRIRMVYDDVHKEWFVPDLFLPAGIYRLQFSINGILTHSNFLPTATDSEGNFVNWFEVLPGYHTIEPFRNEADIDSQVEPTLDEELPKRPELKRFPSSSRKSSYYSAKGVERPSTPFSDYRGLSRSSSINMRDSFVRLKASSLDLMAEVKPERLVYSNEIPNLFNIGDGSTISVKGDSDDVHPQEPPSFTHRVVDCNQDDLFATLQQGGNIDAETAEAVFLSRYPVPDLPIYLNSSYLNRILNQSNQNSESHERDEGAINHIIPHVNLNHLLTSSIRDEIISVACTTRYEGKFITQVVYAPCYYKTQKSQISN</sequence>
<accession>P32578</accession>
<accession>D6VT52</accession>
<protein>
    <recommendedName>
        <fullName>SNF1 protein kinase subunit beta-1</fullName>
    </recommendedName>
    <alternativeName>
        <fullName>SNF1-interacting protein 1</fullName>
    </alternativeName>
</protein>
<feature type="initiator methionine" description="Removed" evidence="1">
    <location>
        <position position="1"/>
    </location>
</feature>
<feature type="chain" id="PRO_0000204374" description="SNF1 protein kinase subunit beta-1">
    <location>
        <begin position="2"/>
        <end position="815"/>
    </location>
</feature>
<feature type="region of interest" description="Disordered" evidence="2">
    <location>
        <begin position="1"/>
        <end position="88"/>
    </location>
</feature>
<feature type="region of interest" description="Disordered" evidence="2">
    <location>
        <begin position="117"/>
        <end position="146"/>
    </location>
</feature>
<feature type="region of interest" description="Disordered" evidence="2">
    <location>
        <begin position="311"/>
        <end position="335"/>
    </location>
</feature>
<feature type="region of interest" description="Disordered" evidence="2">
    <location>
        <begin position="362"/>
        <end position="389"/>
    </location>
</feature>
<feature type="region of interest" description="Kinase-interacting sequence (KIS); required for interaction with SNF1">
    <location>
        <begin position="473"/>
        <end position="716"/>
    </location>
</feature>
<feature type="region of interest" description="Disordered" evidence="2">
    <location>
        <begin position="581"/>
        <end position="616"/>
    </location>
</feature>
<feature type="region of interest" description="Association with SNF1 kinase complex (ASC) domain; required for interaction with SNF4" evidence="12">
    <location>
        <begin position="724"/>
        <end position="804"/>
    </location>
</feature>
<feature type="compositionally biased region" description="Polar residues" evidence="2">
    <location>
        <begin position="1"/>
        <end position="11"/>
    </location>
</feature>
<feature type="compositionally biased region" description="Basic and acidic residues" evidence="2">
    <location>
        <begin position="12"/>
        <end position="31"/>
    </location>
</feature>
<feature type="compositionally biased region" description="Polar residues" evidence="2">
    <location>
        <begin position="32"/>
        <end position="42"/>
    </location>
</feature>
<feature type="compositionally biased region" description="Basic and acidic residues" evidence="2">
    <location>
        <begin position="72"/>
        <end position="88"/>
    </location>
</feature>
<feature type="compositionally biased region" description="Basic and acidic residues" evidence="2">
    <location>
        <begin position="117"/>
        <end position="129"/>
    </location>
</feature>
<feature type="compositionally biased region" description="Low complexity" evidence="2">
    <location>
        <begin position="313"/>
        <end position="326"/>
    </location>
</feature>
<feature type="compositionally biased region" description="Basic residues" evidence="2">
    <location>
        <begin position="363"/>
        <end position="376"/>
    </location>
</feature>
<feature type="compositionally biased region" description="Low complexity" evidence="2">
    <location>
        <begin position="377"/>
        <end position="389"/>
    </location>
</feature>
<feature type="compositionally biased region" description="Basic and acidic residues" evidence="2">
    <location>
        <begin position="587"/>
        <end position="596"/>
    </location>
</feature>
<feature type="compositionally biased region" description="Low complexity" evidence="2">
    <location>
        <begin position="599"/>
        <end position="608"/>
    </location>
</feature>
<feature type="modified residue" description="Phosphoserine" evidence="16">
    <location>
        <position position="33"/>
    </location>
</feature>
<feature type="modified residue" description="Phosphoserine" evidence="16">
    <location>
        <position position="181"/>
    </location>
</feature>
<feature type="modified residue" description="Phosphoserine" evidence="14 16">
    <location>
        <position position="198"/>
    </location>
</feature>
<feature type="modified residue" description="Phosphoserine" evidence="14">
    <location>
        <position position="200"/>
    </location>
</feature>
<feature type="modified residue" description="Phosphoserine" evidence="16">
    <location>
        <position position="206"/>
    </location>
</feature>
<feature type="modified residue" description="Phosphoserine" evidence="16">
    <location>
        <position position="209"/>
    </location>
</feature>
<feature type="modified residue" description="Phosphoserine" evidence="14 16">
    <location>
        <position position="220"/>
    </location>
</feature>
<feature type="modified residue" description="Phosphoserine" evidence="14 15 16">
    <location>
        <position position="331"/>
    </location>
</feature>
<feature type="modified residue" description="Phosphoserine" evidence="14 16">
    <location>
        <position position="494"/>
    </location>
</feature>
<feature type="modified residue" description="Phosphoserine" evidence="14 16">
    <location>
        <position position="497"/>
    </location>
</feature>
<feature type="modified residue" description="Phosphoserine" evidence="14 16">
    <location>
        <position position="643"/>
    </location>
</feature>
<feature type="lipid moiety-binding region" description="N-myristoyl glycine" evidence="1">
    <location>
        <position position="2"/>
    </location>
</feature>
<feature type="mutagenesis site" description="Prevents relocalization to the vacuolar membrane." evidence="8">
    <original>G</original>
    <variation>A</variation>
    <location>
        <position position="2"/>
    </location>
</feature>
<reference key="1">
    <citation type="journal article" date="1992" name="Science">
        <title>A protein kinase substrate identified by the two-hybrid system.</title>
        <authorList>
            <person name="Yang X."/>
            <person name="Hubbard E.J.A."/>
            <person name="Carlson M."/>
        </authorList>
    </citation>
    <scope>NUCLEOTIDE SEQUENCE [GENOMIC DNA]</scope>
    <scope>INTERACTION WITH SNF1</scope>
    <scope>PHOSPHORYLATION</scope>
</reference>
<reference key="2">
    <citation type="journal article" date="1997" name="Nature">
        <title>The nucleotide sequence of Saccharomyces cerevisiae chromosome IV.</title>
        <authorList>
            <person name="Jacq C."/>
            <person name="Alt-Moerbe J."/>
            <person name="Andre B."/>
            <person name="Arnold W."/>
            <person name="Bahr A."/>
            <person name="Ballesta J.P.G."/>
            <person name="Bargues M."/>
            <person name="Baron L."/>
            <person name="Becker A."/>
            <person name="Biteau N."/>
            <person name="Bloecker H."/>
            <person name="Blugeon C."/>
            <person name="Boskovic J."/>
            <person name="Brandt P."/>
            <person name="Brueckner M."/>
            <person name="Buitrago M.J."/>
            <person name="Coster F."/>
            <person name="Delaveau T."/>
            <person name="del Rey F."/>
            <person name="Dujon B."/>
            <person name="Eide L.G."/>
            <person name="Garcia-Cantalejo J.M."/>
            <person name="Goffeau A."/>
            <person name="Gomez-Peris A."/>
            <person name="Granotier C."/>
            <person name="Hanemann V."/>
            <person name="Hankeln T."/>
            <person name="Hoheisel J.D."/>
            <person name="Jaeger W."/>
            <person name="Jimenez A."/>
            <person name="Jonniaux J.-L."/>
            <person name="Kraemer C."/>
            <person name="Kuester H."/>
            <person name="Laamanen P."/>
            <person name="Legros Y."/>
            <person name="Louis E.J."/>
            <person name="Moeller-Rieker S."/>
            <person name="Monnet A."/>
            <person name="Moro M."/>
            <person name="Mueller-Auer S."/>
            <person name="Nussbaumer B."/>
            <person name="Paricio N."/>
            <person name="Paulin L."/>
            <person name="Perea J."/>
            <person name="Perez-Alonso M."/>
            <person name="Perez-Ortin J.E."/>
            <person name="Pohl T.M."/>
            <person name="Prydz H."/>
            <person name="Purnelle B."/>
            <person name="Rasmussen S.W."/>
            <person name="Remacha M.A."/>
            <person name="Revuelta J.L."/>
            <person name="Rieger M."/>
            <person name="Salom D."/>
            <person name="Saluz H.P."/>
            <person name="Saiz J.E."/>
            <person name="Saren A.-M."/>
            <person name="Schaefer M."/>
            <person name="Scharfe M."/>
            <person name="Schmidt E.R."/>
            <person name="Schneider C."/>
            <person name="Scholler P."/>
            <person name="Schwarz S."/>
            <person name="Soler-Mira A."/>
            <person name="Urrestarazu L.A."/>
            <person name="Verhasselt P."/>
            <person name="Vissers S."/>
            <person name="Voet M."/>
            <person name="Volckaert G."/>
            <person name="Wagner G."/>
            <person name="Wambutt R."/>
            <person name="Wedler E."/>
            <person name="Wedler H."/>
            <person name="Woelfl S."/>
            <person name="Harris D.E."/>
            <person name="Bowman S."/>
            <person name="Brown D."/>
            <person name="Churcher C.M."/>
            <person name="Connor R."/>
            <person name="Dedman K."/>
            <person name="Gentles S."/>
            <person name="Hamlin N."/>
            <person name="Hunt S."/>
            <person name="Jones L."/>
            <person name="McDonald S."/>
            <person name="Murphy L.D."/>
            <person name="Niblett D."/>
            <person name="Odell C."/>
            <person name="Oliver K."/>
            <person name="Rajandream M.A."/>
            <person name="Richards C."/>
            <person name="Shore L."/>
            <person name="Walsh S.V."/>
            <person name="Barrell B.G."/>
            <person name="Dietrich F.S."/>
            <person name="Mulligan J.T."/>
            <person name="Allen E."/>
            <person name="Araujo R."/>
            <person name="Aviles E."/>
            <person name="Berno A."/>
            <person name="Carpenter J."/>
            <person name="Chen E."/>
            <person name="Cherry J.M."/>
            <person name="Chung E."/>
            <person name="Duncan M."/>
            <person name="Hunicke-Smith S."/>
            <person name="Hyman R.W."/>
            <person name="Komp C."/>
            <person name="Lashkari D."/>
            <person name="Lew H."/>
            <person name="Lin D."/>
            <person name="Mosedale D."/>
            <person name="Nakahara K."/>
            <person name="Namath A."/>
            <person name="Oefner P."/>
            <person name="Oh C."/>
            <person name="Petel F.X."/>
            <person name="Roberts D."/>
            <person name="Schramm S."/>
            <person name="Schroeder M."/>
            <person name="Shogren T."/>
            <person name="Shroff N."/>
            <person name="Winant A."/>
            <person name="Yelton M.A."/>
            <person name="Botstein D."/>
            <person name="Davis R.W."/>
            <person name="Johnston M."/>
            <person name="Andrews S."/>
            <person name="Brinkman R."/>
            <person name="Cooper J."/>
            <person name="Ding H."/>
            <person name="Du Z."/>
            <person name="Favello A."/>
            <person name="Fulton L."/>
            <person name="Gattung S."/>
            <person name="Greco T."/>
            <person name="Hallsworth K."/>
            <person name="Hawkins J."/>
            <person name="Hillier L.W."/>
            <person name="Jier M."/>
            <person name="Johnson D."/>
            <person name="Johnston L."/>
            <person name="Kirsten J."/>
            <person name="Kucaba T."/>
            <person name="Langston Y."/>
            <person name="Latreille P."/>
            <person name="Le T."/>
            <person name="Mardis E."/>
            <person name="Menezes S."/>
            <person name="Miller N."/>
            <person name="Nhan M."/>
            <person name="Pauley A."/>
            <person name="Peluso D."/>
            <person name="Rifkin L."/>
            <person name="Riles L."/>
            <person name="Taich A."/>
            <person name="Trevaskis E."/>
            <person name="Vignati D."/>
            <person name="Wilcox L."/>
            <person name="Wohldman P."/>
            <person name="Vaudin M."/>
            <person name="Wilson R."/>
            <person name="Waterston R."/>
            <person name="Albermann K."/>
            <person name="Hani J."/>
            <person name="Heumann K."/>
            <person name="Kleine K."/>
            <person name="Mewes H.-W."/>
            <person name="Zollner A."/>
            <person name="Zaccaria P."/>
        </authorList>
    </citation>
    <scope>NUCLEOTIDE SEQUENCE [LARGE SCALE GENOMIC DNA]</scope>
    <source>
        <strain>ATCC 204508 / S288c</strain>
    </source>
</reference>
<reference key="3">
    <citation type="journal article" date="2014" name="G3 (Bethesda)">
        <title>The reference genome sequence of Saccharomyces cerevisiae: Then and now.</title>
        <authorList>
            <person name="Engel S.R."/>
            <person name="Dietrich F.S."/>
            <person name="Fisk D.G."/>
            <person name="Binkley G."/>
            <person name="Balakrishnan R."/>
            <person name="Costanzo M.C."/>
            <person name="Dwight S.S."/>
            <person name="Hitz B.C."/>
            <person name="Karra K."/>
            <person name="Nash R.S."/>
            <person name="Weng S."/>
            <person name="Wong E.D."/>
            <person name="Lloyd P."/>
            <person name="Skrzypek M.S."/>
            <person name="Miyasato S.R."/>
            <person name="Simison M."/>
            <person name="Cherry J.M."/>
        </authorList>
    </citation>
    <scope>GENOME REANNOTATION</scope>
    <source>
        <strain>ATCC 204508 / S288c</strain>
    </source>
</reference>
<reference key="4">
    <citation type="journal article" date="1994" name="EMBO J.">
        <title>A family of proteins containing a conserved domain that mediates interaction with the yeast SNF1 protein kinase complex.</title>
        <authorList>
            <person name="Yang X."/>
            <person name="Jiang R."/>
            <person name="Carlson M."/>
        </authorList>
    </citation>
    <scope>INTERACTION WITH SNF1</scope>
    <scope>PHOSPHORYLATION</scope>
</reference>
<reference key="5">
    <citation type="journal article" date="1994" name="Genetics">
        <title>SIP1 is a catabolite repression-specific negative regulator of GAL gene expression.</title>
        <authorList>
            <person name="Mylin L.M."/>
            <person name="Bushman V.L."/>
            <person name="Long R.M."/>
            <person name="Yu X."/>
            <person name="Lebo C.M."/>
            <person name="Blank T.E."/>
            <person name="Hopper J.E."/>
        </authorList>
    </citation>
    <scope>FUNCTION</scope>
</reference>
<reference key="6">
    <citation type="journal article" date="1995" name="Yeast">
        <title>Genetic and carbon source regulation of phosphorylation of Sip1p, a Snf1p-associated protein involved in carbon response in Saccharomyces cerevisiae.</title>
        <authorList>
            <person name="Long R.M."/>
            <person name="Hopper J.E."/>
        </authorList>
    </citation>
    <scope>PHOSPHORYLATION</scope>
</reference>
<reference key="7">
    <citation type="journal article" date="1997" name="Mol. Cell. Biol.">
        <title>The Snf1 protein kinase and its activating subunit, Snf4, interact with distinct domains of the Sip1/Sip2/Gal83 component in the kinase complex.</title>
        <authorList>
            <person name="Jiang R."/>
            <person name="Carlson M."/>
        </authorList>
    </citation>
    <scope>INTERACTION WITH SNF1 AND SNF4</scope>
</reference>
<reference key="8">
    <citation type="journal article" date="2000" name="EMBO J.">
        <title>beta-subunits of Snf1 kinase are required for kinase function and substrate definition.</title>
        <authorList>
            <person name="Schmidt M.C."/>
            <person name="McCartney R.R."/>
        </authorList>
    </citation>
    <scope>FUNCTION</scope>
</reference>
<reference key="9">
    <citation type="journal article" date="2001" name="Genes Dev.">
        <title>Subcellular localization of the Snf1 kinase is regulated by specific beta subunits and a novel glucose signaling mechanism.</title>
        <authorList>
            <person name="Vincent O."/>
            <person name="Townley R."/>
            <person name="Kuchin S."/>
            <person name="Carlson M."/>
        </authorList>
    </citation>
    <scope>SUBCELLULAR LOCATION</scope>
</reference>
<reference key="10">
    <citation type="journal article" date="2002" name="J. Biol. Chem.">
        <title>Purification and characterization of Snf1 kinase complexes containing a defined beta subunit composition.</title>
        <authorList>
            <person name="Nath N."/>
            <person name="McCartney R.R."/>
            <person name="Schmidt M.C."/>
        </authorList>
    </citation>
    <scope>IDENTIFICATION IN SNF1 KINASE COMPLEX</scope>
</reference>
<reference key="11">
    <citation type="journal article" date="2003" name="Nature">
        <title>Global analysis of protein localization in budding yeast.</title>
        <authorList>
            <person name="Huh W.-K."/>
            <person name="Falvo J.V."/>
            <person name="Gerke L.C."/>
            <person name="Carroll A.S."/>
            <person name="Howson R.W."/>
            <person name="Weissman J.S."/>
            <person name="O'Shea E.K."/>
        </authorList>
    </citation>
    <scope>SUBCELLULAR LOCATION [LARGE SCALE ANALYSIS]</scope>
</reference>
<reference key="12">
    <citation type="journal article" date="2003" name="Nature">
        <title>Global analysis of protein expression in yeast.</title>
        <authorList>
            <person name="Ghaemmaghami S."/>
            <person name="Huh W.-K."/>
            <person name="Bower K."/>
            <person name="Howson R.W."/>
            <person name="Belle A."/>
            <person name="Dephoure N."/>
            <person name="O'Shea E.K."/>
            <person name="Weissman J.S."/>
        </authorList>
    </citation>
    <scope>LEVEL OF PROTEIN EXPRESSION [LARGE SCALE ANALYSIS]</scope>
</reference>
<reference key="13">
    <citation type="journal article" date="2004" name="Mol. Cell. Biol.">
        <title>Cyclic AMP-dependent protein kinase regulates the subcellular localization of Snf1-Sip1 protein kinase.</title>
        <authorList>
            <person name="Hedbacker K."/>
            <person name="Townley R."/>
            <person name="Carlson M."/>
        </authorList>
    </citation>
    <scope>IDENTIFICATION OF INITIATION SITE</scope>
    <scope>SUBCELLULAR LOCATION</scope>
    <scope>MUTAGENESIS OF GLY-2</scope>
</reference>
<reference key="14">
    <citation type="journal article" date="2007" name="J. Proteome Res.">
        <title>Large-scale phosphorylation analysis of alpha-factor-arrested Saccharomyces cerevisiae.</title>
        <authorList>
            <person name="Li X."/>
            <person name="Gerber S.A."/>
            <person name="Rudner A.D."/>
            <person name="Beausoleil S.A."/>
            <person name="Haas W."/>
            <person name="Villen J."/>
            <person name="Elias J.E."/>
            <person name="Gygi S.P."/>
        </authorList>
    </citation>
    <scope>PHOSPHORYLATION [LARGE SCALE ANALYSIS] AT SER-198; SER-200; SER-220; SER-331; SER-494; SER-497 AND SER-643</scope>
    <scope>IDENTIFICATION BY MASS SPECTROMETRY [LARGE SCALE ANALYSIS]</scope>
    <source>
        <strain>ADR376</strain>
    </source>
</reference>
<reference key="15">
    <citation type="journal article" date="2008" name="Mol. Cell. Proteomics">
        <title>A multidimensional chromatography technology for in-depth phosphoproteome analysis.</title>
        <authorList>
            <person name="Albuquerque C.P."/>
            <person name="Smolka M.B."/>
            <person name="Payne S.H."/>
            <person name="Bafna V."/>
            <person name="Eng J."/>
            <person name="Zhou H."/>
        </authorList>
    </citation>
    <scope>PHOSPHORYLATION [LARGE SCALE ANALYSIS] AT SER-331</scope>
    <scope>IDENTIFICATION BY MASS SPECTROMETRY [LARGE SCALE ANALYSIS]</scope>
</reference>
<reference key="16">
    <citation type="journal article" date="2009" name="Science">
        <title>Global analysis of Cdk1 substrate phosphorylation sites provides insights into evolution.</title>
        <authorList>
            <person name="Holt L.J."/>
            <person name="Tuch B.B."/>
            <person name="Villen J."/>
            <person name="Johnson A.D."/>
            <person name="Gygi S.P."/>
            <person name="Morgan D.O."/>
        </authorList>
    </citation>
    <scope>PHOSPHORYLATION [LARGE SCALE ANALYSIS] AT SER-33; SER-181; SER-198; SER-206; SER-209; SER-220; SER-331; SER-494; SER-497 AND SER-643</scope>
    <scope>IDENTIFICATION BY MASS SPECTROMETRY [LARGE SCALE ANALYSIS]</scope>
</reference>
<proteinExistence type="evidence at protein level"/>